<organism>
    <name type="scientific">Limosilactobacillus reuteri subsp. reuteri (strain JCM 1112)</name>
    <name type="common">Lactobacillus reuteri</name>
    <dbReference type="NCBI Taxonomy" id="557433"/>
    <lineage>
        <taxon>Bacteria</taxon>
        <taxon>Bacillati</taxon>
        <taxon>Bacillota</taxon>
        <taxon>Bacilli</taxon>
        <taxon>Lactobacillales</taxon>
        <taxon>Lactobacillaceae</taxon>
        <taxon>Limosilactobacillus</taxon>
    </lineage>
</organism>
<proteinExistence type="inferred from homology"/>
<comment type="function">
    <text evidence="1">Catalyzes the attachment of glutamate to tRNA(Glu) in a two-step reaction: glutamate is first activated by ATP to form Glu-AMP and then transferred to the acceptor end of tRNA(Glu).</text>
</comment>
<comment type="catalytic activity">
    <reaction evidence="1">
        <text>tRNA(Glu) + L-glutamate + ATP = L-glutamyl-tRNA(Glu) + AMP + diphosphate</text>
        <dbReference type="Rhea" id="RHEA:23540"/>
        <dbReference type="Rhea" id="RHEA-COMP:9663"/>
        <dbReference type="Rhea" id="RHEA-COMP:9680"/>
        <dbReference type="ChEBI" id="CHEBI:29985"/>
        <dbReference type="ChEBI" id="CHEBI:30616"/>
        <dbReference type="ChEBI" id="CHEBI:33019"/>
        <dbReference type="ChEBI" id="CHEBI:78442"/>
        <dbReference type="ChEBI" id="CHEBI:78520"/>
        <dbReference type="ChEBI" id="CHEBI:456215"/>
        <dbReference type="EC" id="6.1.1.17"/>
    </reaction>
</comment>
<comment type="subunit">
    <text evidence="1">Monomer.</text>
</comment>
<comment type="subcellular location">
    <subcellularLocation>
        <location evidence="1">Cytoplasm</location>
    </subcellularLocation>
</comment>
<comment type="similarity">
    <text evidence="1">Belongs to the class-I aminoacyl-tRNA synthetase family. Glutamate--tRNA ligase type 1 subfamily.</text>
</comment>
<reference key="1">
    <citation type="journal article" date="2008" name="DNA Res.">
        <title>Comparative genome analysis of Lactobacillus reuteri and Lactobacillus fermentum reveal a genomic island for reuterin and cobalamin production.</title>
        <authorList>
            <person name="Morita H."/>
            <person name="Toh H."/>
            <person name="Fukuda S."/>
            <person name="Horikawa H."/>
            <person name="Oshima K."/>
            <person name="Suzuki T."/>
            <person name="Murakami M."/>
            <person name="Hisamatsu S."/>
            <person name="Kato Y."/>
            <person name="Takizawa T."/>
            <person name="Fukuoka H."/>
            <person name="Yoshimura T."/>
            <person name="Itoh K."/>
            <person name="O'Sullivan D.J."/>
            <person name="McKay L.L."/>
            <person name="Ohno H."/>
            <person name="Kikuchi J."/>
            <person name="Masaoka T."/>
            <person name="Hattori M."/>
        </authorList>
    </citation>
    <scope>NUCLEOTIDE SEQUENCE [LARGE SCALE GENOMIC DNA]</scope>
    <source>
        <strain>JCM 1112</strain>
    </source>
</reference>
<accession>B2G868</accession>
<gene>
    <name evidence="1" type="primary">gltX</name>
    <name type="ordered locus">LAR_1134</name>
</gene>
<feature type="chain" id="PRO_1000090084" description="Glutamate--tRNA ligase">
    <location>
        <begin position="1"/>
        <end position="501"/>
    </location>
</feature>
<feature type="short sequence motif" description="'HIGH' region" evidence="1">
    <location>
        <begin position="11"/>
        <end position="21"/>
    </location>
</feature>
<feature type="short sequence motif" description="'KMSKS' region" evidence="1">
    <location>
        <begin position="257"/>
        <end position="261"/>
    </location>
</feature>
<feature type="binding site" evidence="1">
    <location>
        <position position="260"/>
    </location>
    <ligand>
        <name>ATP</name>
        <dbReference type="ChEBI" id="CHEBI:30616"/>
    </ligand>
</feature>
<keyword id="KW-0030">Aminoacyl-tRNA synthetase</keyword>
<keyword id="KW-0067">ATP-binding</keyword>
<keyword id="KW-0963">Cytoplasm</keyword>
<keyword id="KW-0436">Ligase</keyword>
<keyword id="KW-0547">Nucleotide-binding</keyword>
<keyword id="KW-0648">Protein biosynthesis</keyword>
<dbReference type="EC" id="6.1.1.17" evidence="1"/>
<dbReference type="EMBL" id="AP007281">
    <property type="protein sequence ID" value="BAG25650.1"/>
    <property type="molecule type" value="Genomic_DNA"/>
</dbReference>
<dbReference type="RefSeq" id="WP_003668434.1">
    <property type="nucleotide sequence ID" value="NC_010609.1"/>
</dbReference>
<dbReference type="SMR" id="B2G868"/>
<dbReference type="KEGG" id="lrf:LAR_1134"/>
<dbReference type="HOGENOM" id="CLU_015768_6_1_9"/>
<dbReference type="GO" id="GO:0005829">
    <property type="term" value="C:cytosol"/>
    <property type="evidence" value="ECO:0007669"/>
    <property type="project" value="TreeGrafter"/>
</dbReference>
<dbReference type="GO" id="GO:0005524">
    <property type="term" value="F:ATP binding"/>
    <property type="evidence" value="ECO:0007669"/>
    <property type="project" value="UniProtKB-UniRule"/>
</dbReference>
<dbReference type="GO" id="GO:0004818">
    <property type="term" value="F:glutamate-tRNA ligase activity"/>
    <property type="evidence" value="ECO:0007669"/>
    <property type="project" value="UniProtKB-UniRule"/>
</dbReference>
<dbReference type="GO" id="GO:0000049">
    <property type="term" value="F:tRNA binding"/>
    <property type="evidence" value="ECO:0007669"/>
    <property type="project" value="InterPro"/>
</dbReference>
<dbReference type="GO" id="GO:0008270">
    <property type="term" value="F:zinc ion binding"/>
    <property type="evidence" value="ECO:0007669"/>
    <property type="project" value="InterPro"/>
</dbReference>
<dbReference type="GO" id="GO:0006424">
    <property type="term" value="P:glutamyl-tRNA aminoacylation"/>
    <property type="evidence" value="ECO:0007669"/>
    <property type="project" value="UniProtKB-UniRule"/>
</dbReference>
<dbReference type="CDD" id="cd00808">
    <property type="entry name" value="GluRS_core"/>
    <property type="match status" value="1"/>
</dbReference>
<dbReference type="FunFam" id="3.40.50.620:FF:000007">
    <property type="entry name" value="Glutamate--tRNA ligase"/>
    <property type="match status" value="1"/>
</dbReference>
<dbReference type="Gene3D" id="1.10.10.350">
    <property type="match status" value="1"/>
</dbReference>
<dbReference type="Gene3D" id="3.40.50.620">
    <property type="entry name" value="HUPs"/>
    <property type="match status" value="1"/>
</dbReference>
<dbReference type="HAMAP" id="MF_00022">
    <property type="entry name" value="Glu_tRNA_synth_type1"/>
    <property type="match status" value="1"/>
</dbReference>
<dbReference type="InterPro" id="IPR045462">
    <property type="entry name" value="aa-tRNA-synth_I_cd-bd"/>
</dbReference>
<dbReference type="InterPro" id="IPR020751">
    <property type="entry name" value="aa-tRNA-synth_I_codon-bd_sub2"/>
</dbReference>
<dbReference type="InterPro" id="IPR001412">
    <property type="entry name" value="aa-tRNA-synth_I_CS"/>
</dbReference>
<dbReference type="InterPro" id="IPR008925">
    <property type="entry name" value="aa_tRNA-synth_I_cd-bd_sf"/>
</dbReference>
<dbReference type="InterPro" id="IPR004527">
    <property type="entry name" value="Glu-tRNA-ligase_bac/mito"/>
</dbReference>
<dbReference type="InterPro" id="IPR000924">
    <property type="entry name" value="Glu/Gln-tRNA-synth"/>
</dbReference>
<dbReference type="InterPro" id="IPR020058">
    <property type="entry name" value="Glu/Gln-tRNA-synth_Ib_cat-dom"/>
</dbReference>
<dbReference type="InterPro" id="IPR049940">
    <property type="entry name" value="GluQ/Sye"/>
</dbReference>
<dbReference type="InterPro" id="IPR033910">
    <property type="entry name" value="GluRS_core"/>
</dbReference>
<dbReference type="InterPro" id="IPR014729">
    <property type="entry name" value="Rossmann-like_a/b/a_fold"/>
</dbReference>
<dbReference type="NCBIfam" id="TIGR00464">
    <property type="entry name" value="gltX_bact"/>
    <property type="match status" value="1"/>
</dbReference>
<dbReference type="PANTHER" id="PTHR43311">
    <property type="entry name" value="GLUTAMATE--TRNA LIGASE"/>
    <property type="match status" value="1"/>
</dbReference>
<dbReference type="PANTHER" id="PTHR43311:SF2">
    <property type="entry name" value="GLUTAMATE--TRNA LIGASE, MITOCHONDRIAL-RELATED"/>
    <property type="match status" value="1"/>
</dbReference>
<dbReference type="Pfam" id="PF19269">
    <property type="entry name" value="Anticodon_2"/>
    <property type="match status" value="1"/>
</dbReference>
<dbReference type="Pfam" id="PF00749">
    <property type="entry name" value="tRNA-synt_1c"/>
    <property type="match status" value="1"/>
</dbReference>
<dbReference type="PRINTS" id="PR00987">
    <property type="entry name" value="TRNASYNTHGLU"/>
</dbReference>
<dbReference type="SUPFAM" id="SSF48163">
    <property type="entry name" value="An anticodon-binding domain of class I aminoacyl-tRNA synthetases"/>
    <property type="match status" value="1"/>
</dbReference>
<dbReference type="SUPFAM" id="SSF52374">
    <property type="entry name" value="Nucleotidylyl transferase"/>
    <property type="match status" value="1"/>
</dbReference>
<dbReference type="PROSITE" id="PS00178">
    <property type="entry name" value="AA_TRNA_LIGASE_I"/>
    <property type="match status" value="1"/>
</dbReference>
<sequence length="501" mass="58350">MDQKVRVRYAPSPTGFLHIGNAQSALFNYLFARHFDGTMVLRIEDTDTKRNVEDGEASQRENLHWLGIDWDEGPNKPNPKYAPYRQSERNKEGIYHKYIQELLDKGIAYKDYSTEEELAEMRERQKANNEPPHYDGRWYGKSEEEQKAAEAKGLKPTIRFHFPKDHDYEWDDIARGHVSFNSDNLGGDFIIEKSDGMPTYNFAVVVDDHTMDITHVLRGADHISNTPKQIAIYEALGWEHPTFCHIPLIFNPKTRKKLSKRDKDTLQFISEYKKHGYLHEAIFNFIAFLGWSPVGEREIYSKEELIKVYDPKRMSKAPAYFDQKKLDWMNAQYIKSMSIDELTDRTMELIKEGETEEAKRLQSIPEEQLTELLKKTIKVHQRDVNKLLEVIQYAWSYYTVLDQSFNYDLLKDNEDFANEDVLAVLKGLKAKLENGDDDLDYSQAIKEVGKDTGIKGRGLYFPLNLAFTGSTSAPQIYEIMDIYSRDTDIELLDRMIKAFEN</sequence>
<name>SYE_LIMRJ</name>
<evidence type="ECO:0000255" key="1">
    <source>
        <dbReference type="HAMAP-Rule" id="MF_00022"/>
    </source>
</evidence>
<protein>
    <recommendedName>
        <fullName evidence="1">Glutamate--tRNA ligase</fullName>
        <ecNumber evidence="1">6.1.1.17</ecNumber>
    </recommendedName>
    <alternativeName>
        <fullName evidence="1">Glutamyl-tRNA synthetase</fullName>
        <shortName evidence="1">GluRS</shortName>
    </alternativeName>
</protein>